<feature type="chain" id="PRO_0000301344" description="Phosphoglucosamine mutase">
    <location>
        <begin position="1"/>
        <end position="445"/>
    </location>
</feature>
<feature type="active site" description="Phosphoserine intermediate" evidence="1">
    <location>
        <position position="102"/>
    </location>
</feature>
<feature type="binding site" description="via phosphate group" evidence="1">
    <location>
        <position position="102"/>
    </location>
    <ligand>
        <name>Mg(2+)</name>
        <dbReference type="ChEBI" id="CHEBI:18420"/>
    </ligand>
</feature>
<feature type="binding site" evidence="1">
    <location>
        <position position="240"/>
    </location>
    <ligand>
        <name>Mg(2+)</name>
        <dbReference type="ChEBI" id="CHEBI:18420"/>
    </ligand>
</feature>
<feature type="binding site" evidence="1">
    <location>
        <position position="242"/>
    </location>
    <ligand>
        <name>Mg(2+)</name>
        <dbReference type="ChEBI" id="CHEBI:18420"/>
    </ligand>
</feature>
<feature type="binding site" evidence="1">
    <location>
        <position position="244"/>
    </location>
    <ligand>
        <name>Mg(2+)</name>
        <dbReference type="ChEBI" id="CHEBI:18420"/>
    </ligand>
</feature>
<feature type="modified residue" description="Phosphoserine" evidence="1">
    <location>
        <position position="102"/>
    </location>
</feature>
<reference key="1">
    <citation type="journal article" date="2007" name="Genome Res.">
        <title>Reductive evolution and niche adaptation inferred from the genome of Mycobacterium ulcerans, the causative agent of Buruli ulcer.</title>
        <authorList>
            <person name="Stinear T.P."/>
            <person name="Seemann T."/>
            <person name="Pidot S."/>
            <person name="Frigui W."/>
            <person name="Reysset G."/>
            <person name="Garnier T."/>
            <person name="Meurice G."/>
            <person name="Simon D."/>
            <person name="Bouchier C."/>
            <person name="Ma L."/>
            <person name="Tichit M."/>
            <person name="Porter J.L."/>
            <person name="Ryan J."/>
            <person name="Johnson P.D.R."/>
            <person name="Davies J.K."/>
            <person name="Jenkin G.A."/>
            <person name="Small P.L.C."/>
            <person name="Jones L.M."/>
            <person name="Tekaia F."/>
            <person name="Laval F."/>
            <person name="Daffe M."/>
            <person name="Parkhill J."/>
            <person name="Cole S.T."/>
        </authorList>
    </citation>
    <scope>NUCLEOTIDE SEQUENCE [LARGE SCALE GENOMIC DNA]</scope>
    <source>
        <strain>Agy99</strain>
    </source>
</reference>
<sequence>MGRLFGTDGVRGVANRELTAELALALGAATAQHLASSTGPGRRVAVVGRDPRASGEMLEAAVIAGLTSQGVDALRVGVLPTPAVAYLTGAYDADFGVMISASHNPMPDNGIKIFGPGGHKLDDATENRIESLVAAGPGLRPVGSEIGRVIDAEDAADRYLRHVSKACTTRLDGLTVVVDCAHGAASEVGPRAYRAAGARVIEINADPNGLNINDDCGSTHLEAIRAAVLAHGADLGVAHDGDADRCLAVDANGDLVDGDAIMVVLALAMQEAGELASDTLVTTVMSNLGLHLAMREAGVNVRTTGVGDRYVLEELRAGDYSLGGEQSGHIVMPGLGSTGDGIVTGLRLMTRMVATGASLAALASRMQTLPQVLINVQVTDKATAAAAPSVQAAVDRAETELGDTGRILLRPSGTEPLIRVMVEAADEEAAHRLATSVADAVSAAG</sequence>
<comment type="function">
    <text evidence="1">Catalyzes the conversion of glucosamine-6-phosphate to glucosamine-1-phosphate.</text>
</comment>
<comment type="catalytic activity">
    <reaction evidence="1">
        <text>alpha-D-glucosamine 1-phosphate = D-glucosamine 6-phosphate</text>
        <dbReference type="Rhea" id="RHEA:23424"/>
        <dbReference type="ChEBI" id="CHEBI:58516"/>
        <dbReference type="ChEBI" id="CHEBI:58725"/>
        <dbReference type="EC" id="5.4.2.10"/>
    </reaction>
</comment>
<comment type="cofactor">
    <cofactor evidence="1">
        <name>Mg(2+)</name>
        <dbReference type="ChEBI" id="CHEBI:18420"/>
    </cofactor>
    <text evidence="1">Binds 1 Mg(2+) ion per subunit.</text>
</comment>
<comment type="PTM">
    <text evidence="1">Activated by phosphorylation.</text>
</comment>
<comment type="similarity">
    <text evidence="1">Belongs to the phosphohexose mutase family.</text>
</comment>
<keyword id="KW-0413">Isomerase</keyword>
<keyword id="KW-0460">Magnesium</keyword>
<keyword id="KW-0479">Metal-binding</keyword>
<keyword id="KW-0597">Phosphoprotein</keyword>
<gene>
    <name evidence="1" type="primary">glmM</name>
    <name type="ordered locus">MUL_0866</name>
</gene>
<organism>
    <name type="scientific">Mycobacterium ulcerans (strain Agy99)</name>
    <dbReference type="NCBI Taxonomy" id="362242"/>
    <lineage>
        <taxon>Bacteria</taxon>
        <taxon>Bacillati</taxon>
        <taxon>Actinomycetota</taxon>
        <taxon>Actinomycetes</taxon>
        <taxon>Mycobacteriales</taxon>
        <taxon>Mycobacteriaceae</taxon>
        <taxon>Mycobacterium</taxon>
        <taxon>Mycobacterium ulcerans group</taxon>
    </lineage>
</organism>
<accession>A0PMD3</accession>
<name>GLMM_MYCUA</name>
<proteinExistence type="inferred from homology"/>
<protein>
    <recommendedName>
        <fullName evidence="1">Phosphoglucosamine mutase</fullName>
        <ecNumber evidence="1">5.4.2.10</ecNumber>
    </recommendedName>
</protein>
<dbReference type="EC" id="5.4.2.10" evidence="1"/>
<dbReference type="EMBL" id="CP000325">
    <property type="protein sequence ID" value="ABL03502.1"/>
    <property type="molecule type" value="Genomic_DNA"/>
</dbReference>
<dbReference type="RefSeq" id="WP_011739125.1">
    <property type="nucleotide sequence ID" value="NC_008611.1"/>
</dbReference>
<dbReference type="SMR" id="A0PMD3"/>
<dbReference type="KEGG" id="mul:MUL_0866"/>
<dbReference type="eggNOG" id="COG1109">
    <property type="taxonomic scope" value="Bacteria"/>
</dbReference>
<dbReference type="HOGENOM" id="CLU_016950_7_0_11"/>
<dbReference type="Proteomes" id="UP000000765">
    <property type="component" value="Chromosome"/>
</dbReference>
<dbReference type="GO" id="GO:0005829">
    <property type="term" value="C:cytosol"/>
    <property type="evidence" value="ECO:0007669"/>
    <property type="project" value="TreeGrafter"/>
</dbReference>
<dbReference type="GO" id="GO:0000287">
    <property type="term" value="F:magnesium ion binding"/>
    <property type="evidence" value="ECO:0007669"/>
    <property type="project" value="UniProtKB-UniRule"/>
</dbReference>
<dbReference type="GO" id="GO:0008966">
    <property type="term" value="F:phosphoglucosamine mutase activity"/>
    <property type="evidence" value="ECO:0007669"/>
    <property type="project" value="UniProtKB-UniRule"/>
</dbReference>
<dbReference type="GO" id="GO:0004615">
    <property type="term" value="F:phosphomannomutase activity"/>
    <property type="evidence" value="ECO:0007669"/>
    <property type="project" value="TreeGrafter"/>
</dbReference>
<dbReference type="GO" id="GO:0005975">
    <property type="term" value="P:carbohydrate metabolic process"/>
    <property type="evidence" value="ECO:0007669"/>
    <property type="project" value="InterPro"/>
</dbReference>
<dbReference type="GO" id="GO:0009252">
    <property type="term" value="P:peptidoglycan biosynthetic process"/>
    <property type="evidence" value="ECO:0007669"/>
    <property type="project" value="TreeGrafter"/>
</dbReference>
<dbReference type="GO" id="GO:0006048">
    <property type="term" value="P:UDP-N-acetylglucosamine biosynthetic process"/>
    <property type="evidence" value="ECO:0007669"/>
    <property type="project" value="TreeGrafter"/>
</dbReference>
<dbReference type="CDD" id="cd05802">
    <property type="entry name" value="GlmM"/>
    <property type="match status" value="1"/>
</dbReference>
<dbReference type="FunFam" id="3.30.310.50:FF:000001">
    <property type="entry name" value="Phosphoglucosamine mutase"/>
    <property type="match status" value="1"/>
</dbReference>
<dbReference type="FunFam" id="3.40.120.10:FF:000001">
    <property type="entry name" value="Phosphoglucosamine mutase"/>
    <property type="match status" value="1"/>
</dbReference>
<dbReference type="FunFam" id="3.40.120.10:FF:000002">
    <property type="entry name" value="Phosphoglucosamine mutase"/>
    <property type="match status" value="1"/>
</dbReference>
<dbReference type="Gene3D" id="3.40.120.10">
    <property type="entry name" value="Alpha-D-Glucose-1,6-Bisphosphate, subunit A, domain 3"/>
    <property type="match status" value="3"/>
</dbReference>
<dbReference type="Gene3D" id="3.30.310.50">
    <property type="entry name" value="Alpha-D-phosphohexomutase, C-terminal domain"/>
    <property type="match status" value="1"/>
</dbReference>
<dbReference type="HAMAP" id="MF_01554_B">
    <property type="entry name" value="GlmM_B"/>
    <property type="match status" value="1"/>
</dbReference>
<dbReference type="InterPro" id="IPR005844">
    <property type="entry name" value="A-D-PHexomutase_a/b/a-I"/>
</dbReference>
<dbReference type="InterPro" id="IPR016055">
    <property type="entry name" value="A-D-PHexomutase_a/b/a-I/II/III"/>
</dbReference>
<dbReference type="InterPro" id="IPR005845">
    <property type="entry name" value="A-D-PHexomutase_a/b/a-II"/>
</dbReference>
<dbReference type="InterPro" id="IPR005846">
    <property type="entry name" value="A-D-PHexomutase_a/b/a-III"/>
</dbReference>
<dbReference type="InterPro" id="IPR005843">
    <property type="entry name" value="A-D-PHexomutase_C"/>
</dbReference>
<dbReference type="InterPro" id="IPR036900">
    <property type="entry name" value="A-D-PHexomutase_C_sf"/>
</dbReference>
<dbReference type="InterPro" id="IPR016066">
    <property type="entry name" value="A-D-PHexomutase_CS"/>
</dbReference>
<dbReference type="InterPro" id="IPR005841">
    <property type="entry name" value="Alpha-D-phosphohexomutase_SF"/>
</dbReference>
<dbReference type="InterPro" id="IPR006352">
    <property type="entry name" value="GlmM_bact"/>
</dbReference>
<dbReference type="InterPro" id="IPR050060">
    <property type="entry name" value="Phosphoglucosamine_mutase"/>
</dbReference>
<dbReference type="NCBIfam" id="TIGR01455">
    <property type="entry name" value="glmM"/>
    <property type="match status" value="1"/>
</dbReference>
<dbReference type="PANTHER" id="PTHR42946:SF1">
    <property type="entry name" value="PHOSPHOGLUCOMUTASE (ALPHA-D-GLUCOSE-1,6-BISPHOSPHATE-DEPENDENT)"/>
    <property type="match status" value="1"/>
</dbReference>
<dbReference type="PANTHER" id="PTHR42946">
    <property type="entry name" value="PHOSPHOHEXOSE MUTASE"/>
    <property type="match status" value="1"/>
</dbReference>
<dbReference type="Pfam" id="PF02878">
    <property type="entry name" value="PGM_PMM_I"/>
    <property type="match status" value="1"/>
</dbReference>
<dbReference type="Pfam" id="PF02879">
    <property type="entry name" value="PGM_PMM_II"/>
    <property type="match status" value="1"/>
</dbReference>
<dbReference type="Pfam" id="PF02880">
    <property type="entry name" value="PGM_PMM_III"/>
    <property type="match status" value="1"/>
</dbReference>
<dbReference type="Pfam" id="PF00408">
    <property type="entry name" value="PGM_PMM_IV"/>
    <property type="match status" value="1"/>
</dbReference>
<dbReference type="PRINTS" id="PR00509">
    <property type="entry name" value="PGMPMM"/>
</dbReference>
<dbReference type="SUPFAM" id="SSF55957">
    <property type="entry name" value="Phosphoglucomutase, C-terminal domain"/>
    <property type="match status" value="1"/>
</dbReference>
<dbReference type="SUPFAM" id="SSF53738">
    <property type="entry name" value="Phosphoglucomutase, first 3 domains"/>
    <property type="match status" value="3"/>
</dbReference>
<dbReference type="PROSITE" id="PS00710">
    <property type="entry name" value="PGM_PMM"/>
    <property type="match status" value="1"/>
</dbReference>
<evidence type="ECO:0000255" key="1">
    <source>
        <dbReference type="HAMAP-Rule" id="MF_01554"/>
    </source>
</evidence>